<sequence length="147" mass="16264">MFNMNINSPVRFVKETNRAKSPTRQSPGAAGYDLYSAYDYTIPPGERQLIKTDISMSMPKICYGRIAPRSGLSLKGIDIGGGVIDEDYRGNIGVILINNGKCTFNVNTGDRIAQLIYQRIYYPELEEVQSLDSTNRGDQGFGSTGLR</sequence>
<protein>
    <recommendedName>
        <fullName>Deoxyuridine 5'-triphosphate nucleotidohydrolase</fullName>
        <shortName>dUTPase</shortName>
        <ecNumber>3.6.1.23</ecNumber>
    </recommendedName>
    <alternativeName>
        <fullName>dUTP pyrophosphatase</fullName>
    </alternativeName>
</protein>
<name>DUT_VACCA</name>
<evidence type="ECO:0000250" key="1">
    <source>
        <dbReference type="UniProtKB" id="P17374"/>
    </source>
</evidence>
<evidence type="ECO:0000305" key="2"/>
<proteinExistence type="inferred from homology"/>
<gene>
    <name type="primary">OPG046</name>
    <name type="synonym">DUT</name>
    <name type="synonym">F2L</name>
    <name type="ordered locus">MVA030L</name>
    <name type="ordered locus">ACAM3000_MVA_030</name>
</gene>
<accession>Q76RE7</accession>
<keyword id="KW-0244">Early protein</keyword>
<keyword id="KW-0378">Hydrolase</keyword>
<keyword id="KW-0460">Magnesium</keyword>
<keyword id="KW-0479">Metal-binding</keyword>
<keyword id="KW-0546">Nucleotide metabolism</keyword>
<reference key="1">
    <citation type="journal article" date="1998" name="Virology">
        <title>The complete genomic sequence of the modified vaccinia Ankara strain: comparison with other orthopoxviruses.</title>
        <authorList>
            <person name="Antoine G."/>
            <person name="Scheiflinger F."/>
            <person name="Dorner F."/>
            <person name="Falkner F.G."/>
        </authorList>
    </citation>
    <scope>NUCLEOTIDE SEQUENCE [LARGE SCALE GENOMIC DNA]</scope>
</reference>
<reference key="2">
    <citation type="submission" date="2004-04" db="EMBL/GenBank/DDBJ databases">
        <authorList>
            <person name="Esposito J.J."/>
            <person name="Frace M."/>
            <person name="Sammons S.A."/>
            <person name="Olsen-Rasmussen M.S."/>
            <person name="Osborne J."/>
            <person name="Khristova M."/>
            <person name="Wohlhueter R.M."/>
        </authorList>
    </citation>
    <scope>NUCLEOTIDE SEQUENCE [LARGE SCALE GENOMIC DNA]</scope>
    <source>
        <strain>Isolate Acambis 3000</strain>
    </source>
</reference>
<dbReference type="EC" id="3.6.1.23"/>
<dbReference type="EMBL" id="U94848">
    <property type="protein sequence ID" value="AAB96413.1"/>
    <property type="molecule type" value="Genomic_DNA"/>
</dbReference>
<dbReference type="EMBL" id="AY603355">
    <property type="protein sequence ID" value="AAT10428.1"/>
    <property type="molecule type" value="Genomic_DNA"/>
</dbReference>
<dbReference type="PIR" id="G42506">
    <property type="entry name" value="PRVZ7F"/>
</dbReference>
<dbReference type="SMR" id="Q76RE7"/>
<dbReference type="Proteomes" id="UP000159908">
    <property type="component" value="Segment"/>
</dbReference>
<dbReference type="Proteomes" id="UP000172909">
    <property type="component" value="Segment"/>
</dbReference>
<dbReference type="GO" id="GO:0004170">
    <property type="term" value="F:dUTP diphosphatase activity"/>
    <property type="evidence" value="ECO:0007669"/>
    <property type="project" value="UniProtKB-EC"/>
</dbReference>
<dbReference type="GO" id="GO:0000287">
    <property type="term" value="F:magnesium ion binding"/>
    <property type="evidence" value="ECO:0007669"/>
    <property type="project" value="InterPro"/>
</dbReference>
<dbReference type="GO" id="GO:0006226">
    <property type="term" value="P:dUMP biosynthetic process"/>
    <property type="evidence" value="ECO:0007669"/>
    <property type="project" value="InterPro"/>
</dbReference>
<dbReference type="GO" id="GO:0046081">
    <property type="term" value="P:dUTP catabolic process"/>
    <property type="evidence" value="ECO:0007669"/>
    <property type="project" value="InterPro"/>
</dbReference>
<dbReference type="CDD" id="cd07557">
    <property type="entry name" value="trimeric_dUTPase"/>
    <property type="match status" value="1"/>
</dbReference>
<dbReference type="Gene3D" id="2.70.40.10">
    <property type="match status" value="1"/>
</dbReference>
<dbReference type="InterPro" id="IPR008181">
    <property type="entry name" value="dUTPase"/>
</dbReference>
<dbReference type="InterPro" id="IPR029054">
    <property type="entry name" value="dUTPase-like"/>
</dbReference>
<dbReference type="InterPro" id="IPR036157">
    <property type="entry name" value="dUTPase-like_sf"/>
</dbReference>
<dbReference type="InterPro" id="IPR033704">
    <property type="entry name" value="dUTPase_trimeric"/>
</dbReference>
<dbReference type="NCBIfam" id="TIGR00576">
    <property type="entry name" value="dut"/>
    <property type="match status" value="1"/>
</dbReference>
<dbReference type="NCBIfam" id="NF001862">
    <property type="entry name" value="PRK00601.1"/>
    <property type="match status" value="1"/>
</dbReference>
<dbReference type="PANTHER" id="PTHR11241">
    <property type="entry name" value="DEOXYURIDINE 5'-TRIPHOSPHATE NUCLEOTIDOHYDROLASE"/>
    <property type="match status" value="1"/>
</dbReference>
<dbReference type="PANTHER" id="PTHR11241:SF0">
    <property type="entry name" value="DEOXYURIDINE 5'-TRIPHOSPHATE NUCLEOTIDOHYDROLASE"/>
    <property type="match status" value="1"/>
</dbReference>
<dbReference type="Pfam" id="PF00692">
    <property type="entry name" value="dUTPase"/>
    <property type="match status" value="1"/>
</dbReference>
<dbReference type="SUPFAM" id="SSF51283">
    <property type="entry name" value="dUTPase-like"/>
    <property type="match status" value="1"/>
</dbReference>
<comment type="function">
    <text evidence="1">This enzyme is involved in nucleotide metabolism: it produces dUMP, the immediate precursor of thymidine nucleotides and it decreases the intracellular concentration of dUTP so that uracil cannot be incorporated into DNA.</text>
</comment>
<comment type="catalytic activity">
    <reaction evidence="1">
        <text>dUTP + H2O = dUMP + diphosphate + H(+)</text>
        <dbReference type="Rhea" id="RHEA:10248"/>
        <dbReference type="ChEBI" id="CHEBI:15377"/>
        <dbReference type="ChEBI" id="CHEBI:15378"/>
        <dbReference type="ChEBI" id="CHEBI:33019"/>
        <dbReference type="ChEBI" id="CHEBI:61555"/>
        <dbReference type="ChEBI" id="CHEBI:246422"/>
        <dbReference type="EC" id="3.6.1.23"/>
    </reaction>
    <physiologicalReaction direction="left-to-right" evidence="1">
        <dbReference type="Rhea" id="RHEA:10249"/>
    </physiologicalReaction>
</comment>
<comment type="induction">
    <text evidence="1">Expressed in the early phase of the viral replicative cycle.</text>
</comment>
<comment type="similarity">
    <text evidence="2">Belongs to the dUTPase family.</text>
</comment>
<comment type="caution">
    <text evidence="2">Was originally thought to be a protease-like protein (pseudoprotease).</text>
</comment>
<organismHost>
    <name type="scientific">Homo sapiens</name>
    <name type="common">Human</name>
    <dbReference type="NCBI Taxonomy" id="9606"/>
</organismHost>
<organism>
    <name type="scientific">Vaccinia virus (strain Ankara)</name>
    <name type="common">VACV</name>
    <dbReference type="NCBI Taxonomy" id="126794"/>
    <lineage>
        <taxon>Viruses</taxon>
        <taxon>Varidnaviria</taxon>
        <taxon>Bamfordvirae</taxon>
        <taxon>Nucleocytoviricota</taxon>
        <taxon>Pokkesviricetes</taxon>
        <taxon>Chitovirales</taxon>
        <taxon>Poxviridae</taxon>
        <taxon>Chordopoxvirinae</taxon>
        <taxon>Orthopoxvirus</taxon>
        <taxon>Vaccinia virus</taxon>
    </lineage>
</organism>
<feature type="chain" id="PRO_0000182939" description="Deoxyuridine 5'-triphosphate nucleotidohydrolase">
    <location>
        <begin position="1"/>
        <end position="147"/>
    </location>
</feature>
<feature type="binding site" evidence="1">
    <location>
        <position position="24"/>
    </location>
    <ligand>
        <name>Mg(2+)</name>
        <dbReference type="ChEBI" id="CHEBI:18420"/>
    </ligand>
</feature>
<feature type="binding site" evidence="1">
    <location>
        <begin position="68"/>
        <end position="70"/>
    </location>
    <ligand>
        <name>dUTP</name>
        <dbReference type="ChEBI" id="CHEBI:61555"/>
    </ligand>
</feature>
<feature type="binding site" evidence="1">
    <location>
        <begin position="82"/>
        <end position="85"/>
    </location>
    <ligand>
        <name>dUTP</name>
        <dbReference type="ChEBI" id="CHEBI:61555"/>
    </ligand>
</feature>
<feature type="binding site" evidence="1">
    <location>
        <position position="88"/>
    </location>
    <ligand>
        <name>dUTP</name>
        <dbReference type="ChEBI" id="CHEBI:61555"/>
    </ligand>
</feature>
<feature type="binding site" evidence="1">
    <location>
        <position position="93"/>
    </location>
    <ligand>
        <name>dUTP</name>
        <dbReference type="ChEBI" id="CHEBI:61555"/>
    </ligand>
</feature>
<feature type="binding site" evidence="1">
    <location>
        <position position="95"/>
    </location>
    <ligand>
        <name>dUTP</name>
        <dbReference type="ChEBI" id="CHEBI:61555"/>
    </ligand>
</feature>
<feature type="binding site" evidence="1">
    <location>
        <position position="111"/>
    </location>
    <ligand>
        <name>dUTP</name>
        <dbReference type="ChEBI" id="CHEBI:61555"/>
    </ligand>
</feature>